<name>AROA_STAA1</name>
<feature type="chain" id="PRO_1000012484" description="3-phosphoshikimate 1-carboxyvinyltransferase">
    <location>
        <begin position="1"/>
        <end position="432"/>
    </location>
</feature>
<feature type="active site" description="Proton acceptor" evidence="1">
    <location>
        <position position="317"/>
    </location>
</feature>
<feature type="binding site" evidence="1">
    <location>
        <position position="23"/>
    </location>
    <ligand>
        <name>3-phosphoshikimate</name>
        <dbReference type="ChEBI" id="CHEBI:145989"/>
    </ligand>
</feature>
<feature type="binding site" evidence="1">
    <location>
        <position position="23"/>
    </location>
    <ligand>
        <name>phosphoenolpyruvate</name>
        <dbReference type="ChEBI" id="CHEBI:58702"/>
    </ligand>
</feature>
<feature type="binding site" evidence="1">
    <location>
        <position position="24"/>
    </location>
    <ligand>
        <name>3-phosphoshikimate</name>
        <dbReference type="ChEBI" id="CHEBI:145989"/>
    </ligand>
</feature>
<feature type="binding site" evidence="1">
    <location>
        <position position="28"/>
    </location>
    <ligand>
        <name>3-phosphoshikimate</name>
        <dbReference type="ChEBI" id="CHEBI:145989"/>
    </ligand>
</feature>
<feature type="binding site" evidence="1">
    <location>
        <position position="95"/>
    </location>
    <ligand>
        <name>phosphoenolpyruvate</name>
        <dbReference type="ChEBI" id="CHEBI:58702"/>
    </ligand>
</feature>
<feature type="binding site" evidence="1">
    <location>
        <position position="123"/>
    </location>
    <ligand>
        <name>phosphoenolpyruvate</name>
        <dbReference type="ChEBI" id="CHEBI:58702"/>
    </ligand>
</feature>
<feature type="binding site" evidence="1">
    <location>
        <position position="167"/>
    </location>
    <ligand>
        <name>3-phosphoshikimate</name>
        <dbReference type="ChEBI" id="CHEBI:145989"/>
    </ligand>
</feature>
<feature type="binding site" evidence="1">
    <location>
        <position position="169"/>
    </location>
    <ligand>
        <name>3-phosphoshikimate</name>
        <dbReference type="ChEBI" id="CHEBI:145989"/>
    </ligand>
</feature>
<feature type="binding site" evidence="1">
    <location>
        <position position="169"/>
    </location>
    <ligand>
        <name>phosphoenolpyruvate</name>
        <dbReference type="ChEBI" id="CHEBI:58702"/>
    </ligand>
</feature>
<feature type="binding site" evidence="1">
    <location>
        <position position="317"/>
    </location>
    <ligand>
        <name>3-phosphoshikimate</name>
        <dbReference type="ChEBI" id="CHEBI:145989"/>
    </ligand>
</feature>
<feature type="binding site" evidence="1">
    <location>
        <position position="344"/>
    </location>
    <ligand>
        <name>3-phosphoshikimate</name>
        <dbReference type="ChEBI" id="CHEBI:145989"/>
    </ligand>
</feature>
<feature type="binding site" evidence="1">
    <location>
        <position position="348"/>
    </location>
    <ligand>
        <name>phosphoenolpyruvate</name>
        <dbReference type="ChEBI" id="CHEBI:58702"/>
    </ligand>
</feature>
<feature type="binding site" evidence="1">
    <location>
        <position position="390"/>
    </location>
    <ligand>
        <name>phosphoenolpyruvate</name>
        <dbReference type="ChEBI" id="CHEBI:58702"/>
    </ligand>
</feature>
<reference key="1">
    <citation type="journal article" date="2008" name="Antimicrob. Agents Chemother.">
        <title>Mutated response regulator graR is responsible for phenotypic conversion of Staphylococcus aureus from heterogeneous vancomycin-intermediate resistance to vancomycin-intermediate resistance.</title>
        <authorList>
            <person name="Neoh H.-M."/>
            <person name="Cui L."/>
            <person name="Yuzawa H."/>
            <person name="Takeuchi F."/>
            <person name="Matsuo M."/>
            <person name="Hiramatsu K."/>
        </authorList>
    </citation>
    <scope>NUCLEOTIDE SEQUENCE [LARGE SCALE GENOMIC DNA]</scope>
    <source>
        <strain>Mu3 / ATCC 700698</strain>
    </source>
</reference>
<proteinExistence type="inferred from homology"/>
<evidence type="ECO:0000255" key="1">
    <source>
        <dbReference type="HAMAP-Rule" id="MF_00210"/>
    </source>
</evidence>
<sequence length="432" mass="47068">MVSEQIIDISGPLKGEIEVPGDKSMTHRAIMLASLAEGTSNIYKPLLGEDCRRTMDIFRLLGVDIKEDEDKLVVNSPGYKAFKTPHQVLYTGNSGTTTRLLAGLLSGLGIESVLSGDVSIGKRPMDRVLRPLKLMDANIEGIEDNYTPLIIKPSVIKGINYQMEVASAQVKSAILFASLFSNDTTVIKELDVSRNHTETMFRHFNIPIEAERLSITTTPDAIQHIKPADFHVPGDISSAAFFIVAALITPESDVTIHNVGINPTRSGIIDIVEKMGGNIQLFNQTTGAEPTASIRIQYTPMLQPITIEGELVPKAIDELPVIALLCTQAVGTSTIKDAEELKVKETNRIDTTADMLNLLGFELQPTNDGLIIHPSEFKTNATVDSLTDHRIGMMLAVASLLSSEPVKIKQFDAVNVSFPGFLPKLKLLENEG</sequence>
<gene>
    <name evidence="1" type="primary">aroA</name>
    <name type="ordered locus">SAHV_1452</name>
</gene>
<protein>
    <recommendedName>
        <fullName evidence="1">3-phosphoshikimate 1-carboxyvinyltransferase</fullName>
        <ecNumber evidence="1">2.5.1.19</ecNumber>
    </recommendedName>
    <alternativeName>
        <fullName evidence="1">5-enolpyruvylshikimate-3-phosphate synthase</fullName>
        <shortName evidence="1">EPSP synthase</shortName>
        <shortName evidence="1">EPSPS</shortName>
    </alternativeName>
</protein>
<keyword id="KW-0028">Amino-acid biosynthesis</keyword>
<keyword id="KW-0057">Aromatic amino acid biosynthesis</keyword>
<keyword id="KW-0963">Cytoplasm</keyword>
<keyword id="KW-0808">Transferase</keyword>
<comment type="function">
    <text evidence="1">Catalyzes the transfer of the enolpyruvyl moiety of phosphoenolpyruvate (PEP) to the 5-hydroxyl of shikimate-3-phosphate (S3P) to produce enolpyruvyl shikimate-3-phosphate and inorganic phosphate.</text>
</comment>
<comment type="catalytic activity">
    <reaction evidence="1">
        <text>3-phosphoshikimate + phosphoenolpyruvate = 5-O-(1-carboxyvinyl)-3-phosphoshikimate + phosphate</text>
        <dbReference type="Rhea" id="RHEA:21256"/>
        <dbReference type="ChEBI" id="CHEBI:43474"/>
        <dbReference type="ChEBI" id="CHEBI:57701"/>
        <dbReference type="ChEBI" id="CHEBI:58702"/>
        <dbReference type="ChEBI" id="CHEBI:145989"/>
        <dbReference type="EC" id="2.5.1.19"/>
    </reaction>
    <physiologicalReaction direction="left-to-right" evidence="1">
        <dbReference type="Rhea" id="RHEA:21257"/>
    </physiologicalReaction>
</comment>
<comment type="pathway">
    <text evidence="1">Metabolic intermediate biosynthesis; chorismate biosynthesis; chorismate from D-erythrose 4-phosphate and phosphoenolpyruvate: step 6/7.</text>
</comment>
<comment type="subunit">
    <text evidence="1">Monomer.</text>
</comment>
<comment type="subcellular location">
    <subcellularLocation>
        <location evidence="1">Cytoplasm</location>
    </subcellularLocation>
</comment>
<comment type="similarity">
    <text evidence="1">Belongs to the EPSP synthase family.</text>
</comment>
<organism>
    <name type="scientific">Staphylococcus aureus (strain Mu3 / ATCC 700698)</name>
    <dbReference type="NCBI Taxonomy" id="418127"/>
    <lineage>
        <taxon>Bacteria</taxon>
        <taxon>Bacillati</taxon>
        <taxon>Bacillota</taxon>
        <taxon>Bacilli</taxon>
        <taxon>Bacillales</taxon>
        <taxon>Staphylococcaceae</taxon>
        <taxon>Staphylococcus</taxon>
    </lineage>
</organism>
<accession>A7X2G5</accession>
<dbReference type="EC" id="2.5.1.19" evidence="1"/>
<dbReference type="EMBL" id="AP009324">
    <property type="protein sequence ID" value="BAF78335.1"/>
    <property type="molecule type" value="Genomic_DNA"/>
</dbReference>
<dbReference type="RefSeq" id="WP_000253231.1">
    <property type="nucleotide sequence ID" value="NC_009782.1"/>
</dbReference>
<dbReference type="SMR" id="A7X2G5"/>
<dbReference type="KEGG" id="saw:SAHV_1452"/>
<dbReference type="HOGENOM" id="CLU_024321_0_1_9"/>
<dbReference type="UniPathway" id="UPA00053">
    <property type="reaction ID" value="UER00089"/>
</dbReference>
<dbReference type="GO" id="GO:0005737">
    <property type="term" value="C:cytoplasm"/>
    <property type="evidence" value="ECO:0007669"/>
    <property type="project" value="UniProtKB-SubCell"/>
</dbReference>
<dbReference type="GO" id="GO:0003866">
    <property type="term" value="F:3-phosphoshikimate 1-carboxyvinyltransferase activity"/>
    <property type="evidence" value="ECO:0007669"/>
    <property type="project" value="UniProtKB-UniRule"/>
</dbReference>
<dbReference type="GO" id="GO:0008652">
    <property type="term" value="P:amino acid biosynthetic process"/>
    <property type="evidence" value="ECO:0007669"/>
    <property type="project" value="UniProtKB-KW"/>
</dbReference>
<dbReference type="GO" id="GO:0009073">
    <property type="term" value="P:aromatic amino acid family biosynthetic process"/>
    <property type="evidence" value="ECO:0007669"/>
    <property type="project" value="UniProtKB-KW"/>
</dbReference>
<dbReference type="GO" id="GO:0009423">
    <property type="term" value="P:chorismate biosynthetic process"/>
    <property type="evidence" value="ECO:0007669"/>
    <property type="project" value="UniProtKB-UniRule"/>
</dbReference>
<dbReference type="CDD" id="cd01556">
    <property type="entry name" value="EPSP_synthase"/>
    <property type="match status" value="1"/>
</dbReference>
<dbReference type="FunFam" id="3.65.10.10:FF:000005">
    <property type="entry name" value="3-phosphoshikimate 1-carboxyvinyltransferase"/>
    <property type="match status" value="1"/>
</dbReference>
<dbReference type="FunFam" id="3.65.10.10:FF:000006">
    <property type="entry name" value="3-phosphoshikimate 1-carboxyvinyltransferase"/>
    <property type="match status" value="1"/>
</dbReference>
<dbReference type="Gene3D" id="3.65.10.10">
    <property type="entry name" value="Enolpyruvate transferase domain"/>
    <property type="match status" value="2"/>
</dbReference>
<dbReference type="HAMAP" id="MF_00210">
    <property type="entry name" value="EPSP_synth"/>
    <property type="match status" value="1"/>
</dbReference>
<dbReference type="InterPro" id="IPR001986">
    <property type="entry name" value="Enolpyruvate_Tfrase_dom"/>
</dbReference>
<dbReference type="InterPro" id="IPR036968">
    <property type="entry name" value="Enolpyruvate_Tfrase_sf"/>
</dbReference>
<dbReference type="InterPro" id="IPR006264">
    <property type="entry name" value="EPSP_synthase"/>
</dbReference>
<dbReference type="InterPro" id="IPR023193">
    <property type="entry name" value="EPSP_synthase_CS"/>
</dbReference>
<dbReference type="InterPro" id="IPR013792">
    <property type="entry name" value="RNA3'P_cycl/enolpyr_Trfase_a/b"/>
</dbReference>
<dbReference type="NCBIfam" id="TIGR01356">
    <property type="entry name" value="aroA"/>
    <property type="match status" value="1"/>
</dbReference>
<dbReference type="PANTHER" id="PTHR21090">
    <property type="entry name" value="AROM/DEHYDROQUINATE SYNTHASE"/>
    <property type="match status" value="1"/>
</dbReference>
<dbReference type="PANTHER" id="PTHR21090:SF5">
    <property type="entry name" value="PENTAFUNCTIONAL AROM POLYPEPTIDE"/>
    <property type="match status" value="1"/>
</dbReference>
<dbReference type="Pfam" id="PF00275">
    <property type="entry name" value="EPSP_synthase"/>
    <property type="match status" value="1"/>
</dbReference>
<dbReference type="PIRSF" id="PIRSF000505">
    <property type="entry name" value="EPSPS"/>
    <property type="match status" value="1"/>
</dbReference>
<dbReference type="SUPFAM" id="SSF55205">
    <property type="entry name" value="EPT/RTPC-like"/>
    <property type="match status" value="1"/>
</dbReference>
<dbReference type="PROSITE" id="PS00104">
    <property type="entry name" value="EPSP_SYNTHASE_1"/>
    <property type="match status" value="1"/>
</dbReference>
<dbReference type="PROSITE" id="PS00885">
    <property type="entry name" value="EPSP_SYNTHASE_2"/>
    <property type="match status" value="1"/>
</dbReference>